<evidence type="ECO:0000255" key="1">
    <source>
        <dbReference type="HAMAP-Rule" id="MF_01496"/>
    </source>
</evidence>
<organism>
    <name type="scientific">Ostreococcus tauri</name>
    <dbReference type="NCBI Taxonomy" id="70448"/>
    <lineage>
        <taxon>Eukaryota</taxon>
        <taxon>Viridiplantae</taxon>
        <taxon>Chlorophyta</taxon>
        <taxon>Mamiellophyceae</taxon>
        <taxon>Mamiellales</taxon>
        <taxon>Bathycoccaceae</taxon>
        <taxon>Ostreococcus</taxon>
    </lineage>
</organism>
<dbReference type="EMBL" id="CR954199">
    <property type="protein sequence ID" value="CAL36326.1"/>
    <property type="molecule type" value="Genomic_DNA"/>
</dbReference>
<dbReference type="RefSeq" id="YP_717204.2">
    <property type="nucleotide sequence ID" value="NC_008289.1"/>
</dbReference>
<dbReference type="SMR" id="Q0P3Q1"/>
<dbReference type="FunCoup" id="Q0P3Q1">
    <property type="interactions" value="219"/>
</dbReference>
<dbReference type="STRING" id="70448.Q0P3Q1"/>
<dbReference type="GeneID" id="4238882"/>
<dbReference type="KEGG" id="ota:OstapCp01"/>
<dbReference type="eggNOG" id="ENOG502QR3X">
    <property type="taxonomic scope" value="Eukaryota"/>
</dbReference>
<dbReference type="InParanoid" id="Q0P3Q1"/>
<dbReference type="Proteomes" id="UP000009170">
    <property type="component" value="Chloroplast"/>
</dbReference>
<dbReference type="GO" id="GO:0009535">
    <property type="term" value="C:chloroplast thylakoid membrane"/>
    <property type="evidence" value="ECO:0007669"/>
    <property type="project" value="UniProtKB-SubCell"/>
</dbReference>
<dbReference type="GO" id="GO:0009523">
    <property type="term" value="C:photosystem II"/>
    <property type="evidence" value="ECO:0007669"/>
    <property type="project" value="UniProtKB-KW"/>
</dbReference>
<dbReference type="GO" id="GO:0016168">
    <property type="term" value="F:chlorophyll binding"/>
    <property type="evidence" value="ECO:0007669"/>
    <property type="project" value="UniProtKB-UniRule"/>
</dbReference>
<dbReference type="GO" id="GO:0045156">
    <property type="term" value="F:electron transporter, transferring electrons within the cyclic electron transport pathway of photosynthesis activity"/>
    <property type="evidence" value="ECO:0007669"/>
    <property type="project" value="InterPro"/>
</dbReference>
<dbReference type="GO" id="GO:0046872">
    <property type="term" value="F:metal ion binding"/>
    <property type="evidence" value="ECO:0007669"/>
    <property type="project" value="UniProtKB-KW"/>
</dbReference>
<dbReference type="GO" id="GO:0009772">
    <property type="term" value="P:photosynthetic electron transport in photosystem II"/>
    <property type="evidence" value="ECO:0007669"/>
    <property type="project" value="InterPro"/>
</dbReference>
<dbReference type="FunFam" id="1.10.10.670:FF:000001">
    <property type="entry name" value="Photosystem II CP43 reaction center protein"/>
    <property type="match status" value="1"/>
</dbReference>
<dbReference type="Gene3D" id="1.10.10.670">
    <property type="entry name" value="photosystem ii from thermosynechococcus elongatus"/>
    <property type="match status" value="1"/>
</dbReference>
<dbReference type="HAMAP" id="MF_01496">
    <property type="entry name" value="PSII_PsbC_CP43"/>
    <property type="match status" value="1"/>
</dbReference>
<dbReference type="InterPro" id="IPR000932">
    <property type="entry name" value="PS_antenna-like"/>
</dbReference>
<dbReference type="InterPro" id="IPR036001">
    <property type="entry name" value="PS_II_antenna-like_sf"/>
</dbReference>
<dbReference type="InterPro" id="IPR005869">
    <property type="entry name" value="PSII_PsbC"/>
</dbReference>
<dbReference type="InterPro" id="IPR044900">
    <property type="entry name" value="PSII_PsbC_sf"/>
</dbReference>
<dbReference type="NCBIfam" id="TIGR01153">
    <property type="entry name" value="psbC"/>
    <property type="match status" value="1"/>
</dbReference>
<dbReference type="Pfam" id="PF00421">
    <property type="entry name" value="PSII"/>
    <property type="match status" value="1"/>
</dbReference>
<dbReference type="SUPFAM" id="SSF161077">
    <property type="entry name" value="Photosystem II antenna protein-like"/>
    <property type="match status" value="1"/>
</dbReference>
<proteinExistence type="inferred from homology"/>
<feature type="propeptide" id="PRO_0000431188" evidence="1">
    <location>
        <begin position="1"/>
        <end position="14"/>
    </location>
</feature>
<feature type="chain" id="PRO_0000361460" description="Photosystem II CP43 reaction center protein" evidence="1">
    <location>
        <begin position="15"/>
        <end position="473"/>
    </location>
</feature>
<feature type="transmembrane region" description="Helical" evidence="1">
    <location>
        <begin position="69"/>
        <end position="93"/>
    </location>
</feature>
<feature type="transmembrane region" description="Helical" evidence="1">
    <location>
        <begin position="134"/>
        <end position="155"/>
    </location>
</feature>
<feature type="transmembrane region" description="Helical" evidence="1">
    <location>
        <begin position="178"/>
        <end position="200"/>
    </location>
</feature>
<feature type="transmembrane region" description="Helical" evidence="1">
    <location>
        <begin position="255"/>
        <end position="275"/>
    </location>
</feature>
<feature type="transmembrane region" description="Helical" evidence="1">
    <location>
        <begin position="291"/>
        <end position="312"/>
    </location>
</feature>
<feature type="transmembrane region" description="Helical" evidence="1">
    <location>
        <begin position="447"/>
        <end position="471"/>
    </location>
</feature>
<feature type="binding site" evidence="1">
    <location>
        <position position="367"/>
    </location>
    <ligand>
        <name>[CaMn4O5] cluster</name>
        <dbReference type="ChEBI" id="CHEBI:189552"/>
    </ligand>
</feature>
<feature type="modified residue" description="N-acetylthreonine" evidence="1">
    <location>
        <position position="15"/>
    </location>
</feature>
<feature type="modified residue" description="Phosphothreonine" evidence="1">
    <location>
        <position position="15"/>
    </location>
</feature>
<reference key="1">
    <citation type="journal article" date="2007" name="Mol. Biol. Evol.">
        <title>The complete chloroplast and mitochondrial DNA sequence of Ostreococcus tauri: organelle genomes of the smallest eukaryote are examples of compaction.</title>
        <authorList>
            <person name="Robbens S."/>
            <person name="Derelle E."/>
            <person name="Ferraz C."/>
            <person name="Wuyts J."/>
            <person name="Moreau H."/>
            <person name="Van de Peer Y."/>
        </authorList>
    </citation>
    <scope>NUCLEOTIDE SEQUENCE [LARGE SCALE GENOMIC DNA]</scope>
    <source>
        <strain>OTTH0595</strain>
    </source>
</reference>
<name>PSBC_OSTTA</name>
<protein>
    <recommendedName>
        <fullName evidence="1">Photosystem II CP43 reaction center protein</fullName>
    </recommendedName>
    <alternativeName>
        <fullName evidence="1">PSII 43 kDa protein</fullName>
    </alternativeName>
    <alternativeName>
        <fullName evidence="1">Protein CP-43</fullName>
    </alternativeName>
</protein>
<geneLocation type="chloroplast"/>
<keyword id="KW-0007">Acetylation</keyword>
<keyword id="KW-0148">Chlorophyll</keyword>
<keyword id="KW-0150">Chloroplast</keyword>
<keyword id="KW-0157">Chromophore</keyword>
<keyword id="KW-0464">Manganese</keyword>
<keyword id="KW-0472">Membrane</keyword>
<keyword id="KW-0479">Metal-binding</keyword>
<keyword id="KW-0597">Phosphoprotein</keyword>
<keyword id="KW-0602">Photosynthesis</keyword>
<keyword id="KW-0604">Photosystem II</keyword>
<keyword id="KW-0934">Plastid</keyword>
<keyword id="KW-1185">Reference proteome</keyword>
<keyword id="KW-0793">Thylakoid</keyword>
<keyword id="KW-0812">Transmembrane</keyword>
<keyword id="KW-1133">Transmembrane helix</keyword>
<sequence length="473" mass="52168">MKTLYSLRRYFHVETLFNSTLVVGGRDQESTGFAWWAGNARLINLSGKLLGAHVAHAGLIVFWAGAMNLFEVAHFVPEKPMYEQGLILLPHLAALGYGVGPGGEVLDTFPYFVSGVLHLISSAVLGFGGVYHSLIGPETLEESYPFFGYLWKDKNKMTTILGIHLVLLGIGAWLLVWKAMYFGGVYDTWAPGGGDVRVISYPTYDPSVIFGYLLKSPFGGDGWIISVDNMEDVIGGHIWIGTTLIIGGFFHIFTKPFAWARRAFVWSGEAYLSYSLASVSLMAFIAAVFVWFNNTVYPSEFFGPTGPEASQAQAFTFLVRDQRLGANIASAQGPTGLGKYLMRSPTGEIIFGGETMRFWDMRAPWVEPLRGPNGLDLSKLKNDIQPWQERRSAEYMTHAPLGSLNSVGGVATEINSTNFVNPRSWLATSHYVLGFFFFVGHLWHAGRARAAAAGFEKGIDRDTEPVLSMRPLD</sequence>
<comment type="function">
    <text evidence="1">One of the components of the core complex of photosystem II (PSII). It binds chlorophyll and helps catalyze the primary light-induced photochemical processes of PSII. PSII is a light-driven water:plastoquinone oxidoreductase, using light energy to abstract electrons from H(2)O, generating O(2) and a proton gradient subsequently used for ATP formation.</text>
</comment>
<comment type="cofactor">
    <text evidence="1">Binds multiple chlorophylls and provides some of the ligands for the Ca-4Mn-5O cluster of the oxygen-evolving complex. It may also provide a ligand for a Cl- that is required for oxygen evolution. PSII binds additional chlorophylls, carotenoids and specific lipids.</text>
</comment>
<comment type="subunit">
    <text evidence="1">PSII is composed of 1 copy each of membrane proteins PsbA, PsbB, PsbC, PsbD, PsbE, PsbF, PsbH, PsbI, PsbJ, PsbK, PsbL, PsbM, PsbT, PsbX, PsbY, PsbZ, Psb30/Ycf12, at least 3 peripheral proteins of the oxygen-evolving complex and a large number of cofactors. It forms dimeric complexes.</text>
</comment>
<comment type="subcellular location">
    <subcellularLocation>
        <location evidence="1">Plastid</location>
        <location evidence="1">Chloroplast thylakoid membrane</location>
        <topology evidence="1">Multi-pass membrane protein</topology>
    </subcellularLocation>
</comment>
<comment type="similarity">
    <text evidence="1">Belongs to the PsbB/PsbC family. PsbC subfamily.</text>
</comment>
<gene>
    <name evidence="1" type="primary">psbC</name>
    <name type="ordered locus">OtCpg00010</name>
</gene>
<accession>Q0P3Q1</accession>